<sequence>MNNLPATPSPEELMTTPVFQAPETLSPQAEEASTALIAVVITVVFLTLLSVVTLIFFHLYKNKGSYVTYEPAEGEPSAILQMETDSAKGREKEEYFI</sequence>
<accession>Q99KC7</accession>
<proteinExistence type="evidence at protein level"/>
<dbReference type="EMBL" id="BC004728">
    <property type="protein sequence ID" value="AAH04728.2"/>
    <property type="molecule type" value="mRNA"/>
</dbReference>
<dbReference type="EMBL" id="BC132460">
    <property type="protein sequence ID" value="AAI32461.1"/>
    <property type="molecule type" value="mRNA"/>
</dbReference>
<dbReference type="EMBL" id="BC132462">
    <property type="protein sequence ID" value="AAI32463.1"/>
    <property type="molecule type" value="mRNA"/>
</dbReference>
<dbReference type="CCDS" id="CCDS27842.1"/>
<dbReference type="RefSeq" id="NP_001029044.1">
    <property type="nucleotide sequence ID" value="NM_001033872.2"/>
</dbReference>
<dbReference type="RefSeq" id="NP_778157.2">
    <property type="nucleotide sequence ID" value="NM_174992.4"/>
</dbReference>
<dbReference type="FunCoup" id="Q99KC7">
    <property type="interactions" value="61"/>
</dbReference>
<dbReference type="STRING" id="10090.ENSMUSP00000066137"/>
<dbReference type="GlyCosmos" id="Q99KC7">
    <property type="glycosylation" value="6 sites, No reported glycans"/>
</dbReference>
<dbReference type="GlyGen" id="Q99KC7">
    <property type="glycosylation" value="6 sites"/>
</dbReference>
<dbReference type="iPTMnet" id="Q99KC7"/>
<dbReference type="PhosphoSitePlus" id="Q99KC7"/>
<dbReference type="PaxDb" id="10090-ENSMUSP00000066137"/>
<dbReference type="ProteomicsDB" id="261513"/>
<dbReference type="Antibodypedia" id="42988">
    <property type="antibodies" value="102 antibodies from 22 providers"/>
</dbReference>
<dbReference type="Ensembl" id="ENSMUST00000066068.7">
    <property type="protein sequence ID" value="ENSMUSP00000066137.6"/>
    <property type="gene ID" value="ENSMUSG00000053559.14"/>
</dbReference>
<dbReference type="Ensembl" id="ENSMUST00000172334.9">
    <property type="protein sequence ID" value="ENSMUSP00000126870.2"/>
    <property type="gene ID" value="ENSMUSG00000053559.14"/>
</dbReference>
<dbReference type="GeneID" id="207818"/>
<dbReference type="KEGG" id="mmu:207818"/>
<dbReference type="UCSC" id="uc007xru.2">
    <property type="organism name" value="mouse"/>
</dbReference>
<dbReference type="AGR" id="MGI:2448476"/>
<dbReference type="CTD" id="57228"/>
<dbReference type="MGI" id="MGI:2448476">
    <property type="gene designation" value="Smagp"/>
</dbReference>
<dbReference type="VEuPathDB" id="HostDB:ENSMUSG00000053559"/>
<dbReference type="eggNOG" id="ENOG502S7EH">
    <property type="taxonomic scope" value="Eukaryota"/>
</dbReference>
<dbReference type="GeneTree" id="ENSGT00390000010077"/>
<dbReference type="HOGENOM" id="CLU_175196_0_0_1"/>
<dbReference type="InParanoid" id="Q99KC7"/>
<dbReference type="OMA" id="QMEDFPH"/>
<dbReference type="OrthoDB" id="9045634at2759"/>
<dbReference type="PhylomeDB" id="Q99KC7"/>
<dbReference type="BioGRID-ORCS" id="207818">
    <property type="hits" value="0 hits in 78 CRISPR screens"/>
</dbReference>
<dbReference type="ChiTaRS" id="Smagp">
    <property type="organism name" value="mouse"/>
</dbReference>
<dbReference type="PRO" id="PR:Q99KC7"/>
<dbReference type="Proteomes" id="UP000000589">
    <property type="component" value="Chromosome 15"/>
</dbReference>
<dbReference type="RNAct" id="Q99KC7">
    <property type="molecule type" value="protein"/>
</dbReference>
<dbReference type="Bgee" id="ENSMUSG00000053559">
    <property type="expression patterns" value="Expressed in secondary oocyte and 215 other cell types or tissues"/>
</dbReference>
<dbReference type="ExpressionAtlas" id="Q99KC7">
    <property type="expression patterns" value="baseline and differential"/>
</dbReference>
<dbReference type="GO" id="GO:0030054">
    <property type="term" value="C:cell junction"/>
    <property type="evidence" value="ECO:0007669"/>
    <property type="project" value="Ensembl"/>
</dbReference>
<dbReference type="GO" id="GO:0030659">
    <property type="term" value="C:cytoplasmic vesicle membrane"/>
    <property type="evidence" value="ECO:0007669"/>
    <property type="project" value="UniProtKB-SubCell"/>
</dbReference>
<dbReference type="GO" id="GO:0005654">
    <property type="term" value="C:nucleoplasm"/>
    <property type="evidence" value="ECO:0007669"/>
    <property type="project" value="Ensembl"/>
</dbReference>
<dbReference type="GO" id="GO:0005886">
    <property type="term" value="C:plasma membrane"/>
    <property type="evidence" value="ECO:0007669"/>
    <property type="project" value="UniProtKB-SubCell"/>
</dbReference>
<dbReference type="InterPro" id="IPR043243">
    <property type="entry name" value="SMAGP"/>
</dbReference>
<dbReference type="PANTHER" id="PTHR47394">
    <property type="entry name" value="SMALL CELL ADHESION GLYCOPROTEIN"/>
    <property type="match status" value="1"/>
</dbReference>
<dbReference type="PANTHER" id="PTHR47394:SF1">
    <property type="entry name" value="SMALL CELL ADHESION GLYCOPROTEIN"/>
    <property type="match status" value="1"/>
</dbReference>
<gene>
    <name type="primary">Smagp</name>
</gene>
<keyword id="KW-1003">Cell membrane</keyword>
<keyword id="KW-0968">Cytoplasmic vesicle</keyword>
<keyword id="KW-0325">Glycoprotein</keyword>
<keyword id="KW-0472">Membrane</keyword>
<keyword id="KW-1185">Reference proteome</keyword>
<keyword id="KW-0730">Sialic acid</keyword>
<keyword id="KW-0812">Transmembrane</keyword>
<keyword id="KW-1133">Transmembrane helix</keyword>
<comment type="function">
    <text evidence="1">May play a role in epithelial cell-cell contacts. May play a role in tumor invasiveness and metastasis formation (By similarity).</text>
</comment>
<comment type="subcellular location">
    <subcellularLocation>
        <location evidence="2">Cell membrane</location>
        <topology evidence="3">Single-pass type III membrane protein</topology>
    </subcellularLocation>
    <subcellularLocation>
        <location evidence="2">Cytoplasmic vesicle membrane</location>
        <topology evidence="3">Single-pass type III membrane protein</topology>
    </subcellularLocation>
    <text evidence="2">Predominantly on lateral parts of the membrane, at cell-cell epithelial junctions. Detected on cytoplasmic membranes in undifferentiated tumors.</text>
</comment>
<comment type="PTM">
    <text evidence="1">O-glycosylated. The O-glycan is modified with sialic acid residues (By similarity).</text>
</comment>
<comment type="similarity">
    <text evidence="4">Belongs to the SMAGP family.</text>
</comment>
<organism>
    <name type="scientific">Mus musculus</name>
    <name type="common">Mouse</name>
    <dbReference type="NCBI Taxonomy" id="10090"/>
    <lineage>
        <taxon>Eukaryota</taxon>
        <taxon>Metazoa</taxon>
        <taxon>Chordata</taxon>
        <taxon>Craniata</taxon>
        <taxon>Vertebrata</taxon>
        <taxon>Euteleostomi</taxon>
        <taxon>Mammalia</taxon>
        <taxon>Eutheria</taxon>
        <taxon>Euarchontoglires</taxon>
        <taxon>Glires</taxon>
        <taxon>Rodentia</taxon>
        <taxon>Myomorpha</taxon>
        <taxon>Muroidea</taxon>
        <taxon>Muridae</taxon>
        <taxon>Murinae</taxon>
        <taxon>Mus</taxon>
        <taxon>Mus</taxon>
    </lineage>
</organism>
<protein>
    <recommendedName>
        <fullName>Small cell adhesion glycoprotein</fullName>
    </recommendedName>
    <alternativeName>
        <fullName>Small transmembrane and glycosylated protein</fullName>
    </alternativeName>
</protein>
<evidence type="ECO:0000250" key="1"/>
<evidence type="ECO:0000250" key="2">
    <source>
        <dbReference type="UniProtKB" id="Q0VAQ4"/>
    </source>
</evidence>
<evidence type="ECO:0000255" key="3"/>
<evidence type="ECO:0000305" key="4"/>
<feature type="chain" id="PRO_0000328796" description="Small cell adhesion glycoprotein">
    <location>
        <begin position="1"/>
        <end position="97"/>
    </location>
</feature>
<feature type="topological domain" description="Extracellular" evidence="3">
    <location>
        <begin position="1"/>
        <end position="36"/>
    </location>
</feature>
<feature type="transmembrane region" description="Helical; Signal-anchor for type III membrane protein" evidence="3">
    <location>
        <begin position="37"/>
        <end position="57"/>
    </location>
</feature>
<feature type="topological domain" description="Cytoplasmic" evidence="3">
    <location>
        <begin position="58"/>
        <end position="97"/>
    </location>
</feature>
<feature type="glycosylation site" description="O-linked (GalNAc...) threonine" evidence="3">
    <location>
        <position position="7"/>
    </location>
</feature>
<feature type="glycosylation site" description="O-linked (GalNAc...) serine" evidence="3">
    <location>
        <position position="9"/>
    </location>
</feature>
<feature type="glycosylation site" description="O-linked (GalNAc...) threonine" evidence="3">
    <location>
        <position position="15"/>
    </location>
</feature>
<feature type="glycosylation site" description="O-linked (GalNAc...) threonine" evidence="3">
    <location>
        <position position="16"/>
    </location>
</feature>
<feature type="glycosylation site" description="O-linked (GalNAc...) threonine" evidence="3">
    <location>
        <position position="24"/>
    </location>
</feature>
<feature type="glycosylation site" description="O-linked (GalNAc...) serine" evidence="3">
    <location>
        <position position="26"/>
    </location>
</feature>
<reference key="1">
    <citation type="journal article" date="2004" name="Genome Res.">
        <title>The status, quality, and expansion of the NIH full-length cDNA project: the Mammalian Gene Collection (MGC).</title>
        <authorList>
            <consortium name="The MGC Project Team"/>
        </authorList>
    </citation>
    <scope>NUCLEOTIDE SEQUENCE [LARGE SCALE MRNA]</scope>
    <source>
        <strain>FVB/N</strain>
        <tissue>Lung</tissue>
        <tissue>Mammary tumor</tissue>
    </source>
</reference>
<reference key="2">
    <citation type="journal article" date="2010" name="Cell">
        <title>A tissue-specific atlas of mouse protein phosphorylation and expression.</title>
        <authorList>
            <person name="Huttlin E.L."/>
            <person name="Jedrychowski M.P."/>
            <person name="Elias J.E."/>
            <person name="Goswami T."/>
            <person name="Rad R."/>
            <person name="Beausoleil S.A."/>
            <person name="Villen J."/>
            <person name="Haas W."/>
            <person name="Sowa M.E."/>
            <person name="Gygi S.P."/>
        </authorList>
    </citation>
    <scope>IDENTIFICATION BY MASS SPECTROMETRY [LARGE SCALE ANALYSIS]</scope>
    <source>
        <tissue>Kidney</tissue>
        <tissue>Liver</tissue>
        <tissue>Lung</tissue>
    </source>
</reference>
<name>SMAGP_MOUSE</name>